<name>KORB_STRLI</name>
<accession>P22404</accession>
<protein>
    <recommendedName>
        <fullName>Protein KorB</fullName>
    </recommendedName>
</protein>
<organism>
    <name type="scientific">Streptomyces lividans</name>
    <dbReference type="NCBI Taxonomy" id="1916"/>
    <lineage>
        <taxon>Bacteria</taxon>
        <taxon>Bacillati</taxon>
        <taxon>Actinomycetota</taxon>
        <taxon>Actinomycetes</taxon>
        <taxon>Kitasatosporales</taxon>
        <taxon>Streptomycetaceae</taxon>
        <taxon>Streptomyces</taxon>
    </lineage>
</organism>
<comment type="function">
    <text>Repressor for the transcription of certain pIJ101 promoters, including those the from kilA and kilB loci.</text>
</comment>
<feature type="chain" id="PRO_0000084314" description="Protein KorB">
    <location>
        <begin position="1"/>
        <end position="80"/>
    </location>
</feature>
<feature type="DNA-binding region" description="H-T-H motif" evidence="1">
    <location>
        <begin position="13"/>
        <end position="32"/>
    </location>
</feature>
<feature type="DNA-binding region" description="H-T-H motif" evidence="1">
    <location>
        <begin position="56"/>
        <end position="75"/>
    </location>
</feature>
<feature type="sequence conflict" description="In Ref. 2; AAA88412." evidence="2" ref="2">
    <original>NV</original>
    <variation>KL</variation>
    <location>
        <begin position="26"/>
        <end position="27"/>
    </location>
</feature>
<feature type="sequence conflict" description="In Ref. 2; AAA88412." evidence="2" ref="2">
    <original>DV</original>
    <variation>EL</variation>
    <location>
        <begin position="37"/>
        <end position="38"/>
    </location>
</feature>
<dbReference type="EMBL" id="X15695">
    <property type="protein sequence ID" value="CAA33730.1"/>
    <property type="molecule type" value="Genomic_DNA"/>
</dbReference>
<dbReference type="EMBL" id="M21778">
    <property type="protein sequence ID" value="AAA88412.1"/>
    <property type="molecule type" value="Genomic_DNA"/>
</dbReference>
<dbReference type="PIR" id="S08023">
    <property type="entry name" value="S08023"/>
</dbReference>
<dbReference type="RefSeq" id="NP_040449.1">
    <property type="nucleotide sequence ID" value="NC_001387.1"/>
</dbReference>
<dbReference type="RefSeq" id="WP_010889921.1">
    <property type="nucleotide sequence ID" value="NC_001387.1"/>
</dbReference>
<dbReference type="SMR" id="P22404"/>
<dbReference type="GO" id="GO:0003677">
    <property type="term" value="F:DNA binding"/>
    <property type="evidence" value="ECO:0007669"/>
    <property type="project" value="UniProtKB-KW"/>
</dbReference>
<proteinExistence type="predicted"/>
<gene>
    <name type="primary">korB</name>
    <name type="synonym">cop</name>
</gene>
<reference key="1">
    <citation type="submission" date="1989-06" db="EMBL/GenBank/DDBJ databases">
        <authorList>
            <person name="Radnedge L."/>
            <person name="Barallon R."/>
            <person name="Zaman S."/>
            <person name="Richards H.A."/>
            <person name="Ward J.M."/>
        </authorList>
    </citation>
    <scope>NUCLEOTIDE SEQUENCE [GENOMIC DNA]</scope>
    <source>
        <strain>TK24 subsp. 66</strain>
    </source>
</reference>
<reference key="2">
    <citation type="journal article" date="1988" name="J. Bacteriol.">
        <title>Complete nucleotide sequence of the Streptomyces lividans plasmid pIJ101 and correlation of the sequence with genetic properties.</title>
        <authorList>
            <person name="Kendall K.J."/>
            <person name="Cohen S.N."/>
        </authorList>
    </citation>
    <scope>NUCLEOTIDE SEQUENCE [GENOMIC DNA]</scope>
</reference>
<keyword id="KW-0238">DNA-binding</keyword>
<keyword id="KW-0614">Plasmid</keyword>
<keyword id="KW-0678">Repressor</keyword>
<keyword id="KW-0804">Transcription</keyword>
<keyword id="KW-0805">Transcription regulation</keyword>
<evidence type="ECO:0000250" key="1"/>
<evidence type="ECO:0000305" key="2"/>
<geneLocation type="plasmid">
    <name>pIJ101</name>
</geneLocation>
<sequence>MTQKTPGEIRAEAEAALKPLGQQRINVLAELDEIEKDVRPLIAEAVRMEVPYRRINEVTAVAPNTARAWAKAEAEKGSGS</sequence>